<proteinExistence type="evidence at protein level"/>
<feature type="chain" id="PRO_0000205046" description="Bifunctional 3'-5' exonuclease/ATP-dependent helicase WRN">
    <location>
        <begin position="1"/>
        <end position="1401"/>
    </location>
</feature>
<feature type="domain" description="3'-5' exonuclease" evidence="2">
    <location>
        <begin position="51"/>
        <end position="223"/>
    </location>
</feature>
<feature type="domain" description="Helicase ATP-binding" evidence="4">
    <location>
        <begin position="522"/>
        <end position="688"/>
    </location>
</feature>
<feature type="domain" description="Helicase C-terminal" evidence="5">
    <location>
        <begin position="713"/>
        <end position="866"/>
    </location>
</feature>
<feature type="domain" description="HRDC" evidence="3">
    <location>
        <begin position="1115"/>
        <end position="1194"/>
    </location>
</feature>
<feature type="region of interest" description="Interaction with WRNIP1" evidence="8">
    <location>
        <begin position="1"/>
        <end position="271"/>
    </location>
</feature>
<feature type="region of interest" description="Disordered" evidence="6">
    <location>
        <begin position="401"/>
        <end position="427"/>
    </location>
</feature>
<feature type="region of interest" description="Disordered" evidence="6">
    <location>
        <begin position="464"/>
        <end position="492"/>
    </location>
</feature>
<feature type="region of interest" description="Interaction with DNA" evidence="1">
    <location>
        <begin position="952"/>
        <end position="958"/>
    </location>
</feature>
<feature type="region of interest" description="Disordered" evidence="6">
    <location>
        <begin position="1041"/>
        <end position="1106"/>
    </location>
</feature>
<feature type="region of interest" description="Disordered" evidence="6">
    <location>
        <begin position="1323"/>
        <end position="1401"/>
    </location>
</feature>
<feature type="short sequence motif" description="KBM 1" evidence="1">
    <location>
        <begin position="6"/>
        <end position="18"/>
    </location>
</feature>
<feature type="short sequence motif" description="DEAH box" evidence="4">
    <location>
        <begin position="632"/>
        <end position="635"/>
    </location>
</feature>
<feature type="short sequence motif" description="KBM 2" evidence="1">
    <location>
        <begin position="1367"/>
        <end position="1376"/>
    </location>
</feature>
<feature type="short sequence motif" description="XLM" evidence="1">
    <location>
        <begin position="1388"/>
        <end position="1401"/>
    </location>
</feature>
<feature type="compositionally biased region" description="Polar residues" evidence="6">
    <location>
        <begin position="1043"/>
        <end position="1069"/>
    </location>
</feature>
<feature type="compositionally biased region" description="Basic and acidic residues" evidence="6">
    <location>
        <begin position="1070"/>
        <end position="1081"/>
    </location>
</feature>
<feature type="compositionally biased region" description="Polar residues" evidence="6">
    <location>
        <begin position="1323"/>
        <end position="1332"/>
    </location>
</feature>
<feature type="compositionally biased region" description="Basic and acidic residues" evidence="6">
    <location>
        <begin position="1348"/>
        <end position="1358"/>
    </location>
</feature>
<feature type="compositionally biased region" description="Polar residues" evidence="6">
    <location>
        <begin position="1382"/>
        <end position="1392"/>
    </location>
</feature>
<feature type="binding site" evidence="9 13">
    <location>
        <position position="76"/>
    </location>
    <ligand>
        <name>Zn(2+)</name>
        <dbReference type="ChEBI" id="CHEBI:29105"/>
        <label>1</label>
    </ligand>
</feature>
<feature type="binding site" evidence="9 13">
    <location>
        <position position="76"/>
    </location>
    <ligand>
        <name>Zn(2+)</name>
        <dbReference type="ChEBI" id="CHEBI:29105"/>
        <label>2</label>
    </ligand>
</feature>
<feature type="binding site" evidence="9 13">
    <location>
        <position position="78"/>
    </location>
    <ligand>
        <name>Zn(2+)</name>
        <dbReference type="ChEBI" id="CHEBI:29105"/>
        <label>1</label>
    </ligand>
</feature>
<feature type="binding site" evidence="9 13">
    <location>
        <position position="210"/>
    </location>
    <ligand>
        <name>Zn(2+)</name>
        <dbReference type="ChEBI" id="CHEBI:29105"/>
        <label>1</label>
    </ligand>
</feature>
<feature type="binding site" evidence="4">
    <location>
        <begin position="535"/>
        <end position="542"/>
    </location>
    <ligand>
        <name>ATP</name>
        <dbReference type="ChEBI" id="CHEBI:30616"/>
    </ligand>
</feature>
<feature type="binding site" evidence="1">
    <location>
        <position position="873"/>
    </location>
    <ligand>
        <name>Zn(2+)</name>
        <dbReference type="ChEBI" id="CHEBI:29105"/>
        <label>3</label>
    </ligand>
</feature>
<feature type="binding site" evidence="1">
    <location>
        <position position="900"/>
    </location>
    <ligand>
        <name>Zn(2+)</name>
        <dbReference type="ChEBI" id="CHEBI:29105"/>
        <label>3</label>
    </ligand>
</feature>
<feature type="binding site" evidence="1">
    <location>
        <position position="901"/>
    </location>
    <ligand>
        <name>Zn(2+)</name>
        <dbReference type="ChEBI" id="CHEBI:29105"/>
        <label>3</label>
    </ligand>
</feature>
<feature type="binding site" evidence="1">
    <location>
        <position position="904"/>
    </location>
    <ligand>
        <name>Zn(2+)</name>
        <dbReference type="ChEBI" id="CHEBI:29105"/>
        <label>3</label>
    </ligand>
</feature>
<feature type="site" description="Interaction with DNA" evidence="1">
    <location>
        <position position="139"/>
    </location>
</feature>
<feature type="site" description="Interaction with DNA" evidence="1">
    <location>
        <position position="1002"/>
    </location>
</feature>
<feature type="modified residue" description="Phosphoserine" evidence="1">
    <location>
        <position position="419"/>
    </location>
</feature>
<feature type="modified residue" description="Phosphoserine" evidence="1">
    <location>
        <position position="433"/>
    </location>
</feature>
<feature type="modified residue" description="Phosphoserine" evidence="1">
    <location>
        <position position="444"/>
    </location>
</feature>
<feature type="modified residue" description="Phosphoserine" evidence="1">
    <location>
        <position position="1098"/>
    </location>
</feature>
<feature type="modified residue" description="Phosphoserine" evidence="1">
    <location>
        <position position="1364"/>
    </location>
</feature>
<feature type="cross-link" description="Glycyl lysine isopeptide (Lys-Gly) (interchain with G-Cter in SUMO2)" evidence="1">
    <location>
        <position position="148"/>
    </location>
</feature>
<feature type="cross-link" description="Glycyl lysine isopeptide (Lys-Gly) (interchain with G-Cter in SUMO2)" evidence="1">
    <location>
        <position position="235"/>
    </location>
</feature>
<feature type="cross-link" description="Glycyl lysine isopeptide (Lys-Gly) (interchain with G-Cter in SUMO2)" evidence="1">
    <location>
        <position position="246"/>
    </location>
</feature>
<feature type="mutagenesis site" description="Loss of exonuclease activity." evidence="9">
    <original>K</original>
    <variation>A</variation>
    <location>
        <position position="185"/>
    </location>
</feature>
<feature type="mutagenesis site" description="Strongly reduced exonuclease activity." evidence="9">
    <original>R</original>
    <variation>A</variation>
    <location>
        <position position="190"/>
    </location>
</feature>
<feature type="mutagenesis site" description="Loss of exonuclease activity." evidence="9">
    <original>Y</original>
    <variation>F</variation>
    <location>
        <position position="206"/>
    </location>
</feature>
<feature type="sequence conflict" description="In Ref. 1; BAA20269/BAA20270, 2; AAC72359 and 3; AAF64490." evidence="12" ref="1 2 3">
    <original>S</original>
    <variation>N</variation>
    <location>
        <position position="101"/>
    </location>
</feature>
<feature type="sequence conflict" description="In Ref. 1; BAA20269/BAA20270, 2; AAC72359 and 3; AAF64490." evidence="12" ref="1 2 3">
    <original>A</original>
    <variation>V</variation>
    <location>
        <position position="228"/>
    </location>
</feature>
<feature type="sequence conflict" description="In Ref. 1; BAA20269/BAA20270, 2; AAC72359 and 3; AAF64490." evidence="12" ref="1 2 3">
    <original>S</original>
    <variation>L</variation>
    <location>
        <position position="250"/>
    </location>
</feature>
<feature type="sequence conflict" description="In Ref. 1; BAA20269/BAA20270, 2; AAC72359 and 3; AAF64490." evidence="12" ref="1 2 3">
    <original>V</original>
    <variation>M</variation>
    <location>
        <position position="452"/>
    </location>
</feature>
<feature type="sequence conflict" description="In Ref. 1; BAA20269/BAA20270, 2; AAC72359 and 3; AAF64490." evidence="12" ref="1 2 3">
    <original>T</original>
    <variation>K</variation>
    <location>
        <position position="459"/>
    </location>
</feature>
<feature type="sequence conflict" description="In Ref. 1; BAA20269/BAA20270, 2; AAC72359 and 3; AAF64490." evidence="12" ref="1 2 3">
    <original>R</original>
    <variation>C</variation>
    <location>
        <position position="468"/>
    </location>
</feature>
<feature type="sequence conflict" description="In Ref. 1; BAA20269/BAA20270, 2; AAC72359 and 3; AAF64490." evidence="12" ref="1 2 3">
    <original>Q</original>
    <variation>K</variation>
    <location>
        <position position="619"/>
    </location>
</feature>
<feature type="sequence conflict" description="In Ref. 1; BAA20270/BAA20269." evidence="12" ref="1">
    <original>K</original>
    <variation>Q</variation>
    <location>
        <position position="800"/>
    </location>
</feature>
<feature type="sequence conflict" description="In Ref. 2; AAC72359." evidence="12" ref="2">
    <original>L</original>
    <variation>H</variation>
    <location>
        <position position="844"/>
    </location>
</feature>
<feature type="sequence conflict" description="In Ref. 2; AAC72359." evidence="12" ref="2">
    <original>NSQRLPDKYRGHRLFGAGKEQAESWWKTLSHHLI</original>
    <variation>VSVSVIAPGTVSDSAFHCVAMALAFFRWLTSNPC</variation>
    <location>
        <begin position="955"/>
        <end position="988"/>
    </location>
</feature>
<feature type="sequence conflict" description="In Ref. 1; BAA20269/BAA20270 and 3; AAF64490." evidence="12" ref="1 3">
    <original>S</original>
    <variation>L</variation>
    <location>
        <position position="1021"/>
    </location>
</feature>
<feature type="sequence conflict" description="In Ref. 1; BAA20270/BAA20269." evidence="12" ref="1">
    <original>T</original>
    <variation>A</variation>
    <location>
        <position position="1145"/>
    </location>
</feature>
<feature type="sequence conflict" description="In Ref. 1; BAA20270/BAA20269." evidence="12" ref="1">
    <original>L</original>
    <variation>V</variation>
    <location>
        <position position="1181"/>
    </location>
</feature>
<feature type="sequence conflict" description="In Ref. 1; BAA20269/BAA20270 and 3; AAF64490." evidence="12" ref="1 3">
    <original>E</original>
    <variation>G</variation>
    <location>
        <position position="1182"/>
    </location>
</feature>
<feature type="sequence conflict" description="In Ref. 1; BAA20269/BAA20270 and 3; AAF64490." evidence="12" ref="1 3">
    <original>A</original>
    <variation>V</variation>
    <location>
        <position position="1252"/>
    </location>
</feature>
<feature type="sequence conflict" description="In Ref. 1; BAA20269/BAA20270 and 3; AAF64490." evidence="12" ref="1 3">
    <original>L</original>
    <variation>I</variation>
    <location>
        <position position="1308"/>
    </location>
</feature>
<feature type="sequence conflict" description="In Ref. 1; BAA20269/BAA20270 and 3; AAF64490." evidence="12" ref="1 3">
    <original>A</original>
    <variation>V</variation>
    <location>
        <position position="1356"/>
    </location>
</feature>
<feature type="strand" evidence="15">
    <location>
        <begin position="45"/>
        <end position="50"/>
    </location>
</feature>
<feature type="helix" evidence="15">
    <location>
        <begin position="53"/>
        <end position="66"/>
    </location>
</feature>
<feature type="strand" evidence="15">
    <location>
        <begin position="72"/>
        <end position="78"/>
    </location>
</feature>
<feature type="strand" evidence="15">
    <location>
        <begin position="93"/>
        <end position="97"/>
    </location>
</feature>
<feature type="strand" evidence="15">
    <location>
        <begin position="99"/>
        <end position="106"/>
    </location>
</feature>
<feature type="helix" evidence="15">
    <location>
        <begin position="108"/>
        <end position="110"/>
    </location>
</feature>
<feature type="helix" evidence="15">
    <location>
        <begin position="116"/>
        <end position="122"/>
    </location>
</feature>
<feature type="strand" evidence="15">
    <location>
        <begin position="127"/>
        <end position="133"/>
    </location>
</feature>
<feature type="helix" evidence="15">
    <location>
        <begin position="134"/>
        <end position="145"/>
    </location>
</feature>
<feature type="strand" evidence="15">
    <location>
        <begin position="151"/>
        <end position="154"/>
    </location>
</feature>
<feature type="helix" evidence="15">
    <location>
        <begin position="155"/>
        <end position="162"/>
    </location>
</feature>
<feature type="helix" evidence="15">
    <location>
        <begin position="171"/>
        <end position="179"/>
    </location>
</feature>
<feature type="helix" evidence="15">
    <location>
        <begin position="187"/>
        <end position="190"/>
    </location>
</feature>
<feature type="strand" evidence="15">
    <location>
        <begin position="196"/>
        <end position="198"/>
    </location>
</feature>
<feature type="helix" evidence="15">
    <location>
        <begin position="201"/>
        <end position="222"/>
    </location>
</feature>
<name>WRN_MOUSE</name>
<sequence length="1401" mass="157204">METTSLQRKFPEWMSMQSQRCATEEKACVQKSVLEDNLPFLEFPGSIVYSYEASDCSFLSEDISMRLSDGDVVGFDMEWPPIYKPGKRSRVAVIQLCVSESKCYLFHISSMSVFPQGLKMLLENKSIKKAGVGIEGDQWKLLRDFDVKLESFVELTDVANEKLKCAETWSLNGLVKHVLGKQLLKDKSIRCSNWSNFPLTEDQKLYAATDAYAGLIIYQKLGNLGDTAQVFALNKAEENLPLEMKKQLNSISEEMRDLANRFPVTCRNLETLQRVPVILKSISENLCSLRKVICGPTNTETRLKPGSSFNLLSSEDSAAAGEKEKQIGKHSTFAKIKEEPWDPELDSLVKQEEVDVFRNQVKQEKGESENEIEDNLLREDMERTCVIPSISENELQDLEQQAKEEKYNDVSHQLSEHLSPNDDENDSSYIIESDEDLEMEMLKSLENLNSDVVEPTHSTWLEMGTNGRLPPEEEDGHGNEAIKEEQEEEDHLLPEPNAKQINCLKTYFGHSSFKPVQWKVIHSVLEERRDNVVVMATGYGKSLCFQYPPVYTGKIGIVISPLISLMEDQVLQLELSNVPACLLGSAQSKNILGDVKLGKYRVIYITPEFCSGNLDLLQQLDSSIGITLIAVDEAHCISEWGHDFRSSFRMLGSLKTALPLVPVIALSATASSSIREDIISCLNLKDPQITCTGFDRPNLYLEVGRKTGNILQDLKPFLVRKASSAWEFEGPTIIYCPSRKMTEQVTAELGKLNLACRTYHAGMKISERKDVHHRFLRDEIQCVVATVAFGMGINKADIRKVIHYGAPKEMESYYQEIGRAGRDGLQSSCHLLWAPADFNTSRNLLIEIHDEKFRLYKLKMMVKMEKYLHSSQCRRRIILSHFEDKCLQKASLDIMGTEKCCDNCRPRLNHCLTANNSEDASQDFGPQAFQLLSAVDILQEKFGIGIPILFLRGSNSQRLPDKYRGHRLFGAGKEQAESWWKTLSHHLIAEGFLVEVPKENKYIKTCSLTKKGRKWLGEASSQSPPSLLLQANEEMFPRKVLLPSSNPVSPETTQHSSNQNPAGLTTKQSNLERTHSYKVPEKVSSGTNIPKKSAVMPSPGTSSSPLEPAISAQELDARTGLYARLVEARQKHANKMDVPPAILATNKVLLDMAKMRPTTVENMKQIDGVSEGKAALLAPLLEVIKHFCQVTSVQTDLLSSAKPHKEQEKSQEMEKKDCSLPQSVAVTYTLFQEKKMPLHSIAENRLLPLTAAGMHLAQAVKAGYPLDMERAGLTPETWKIIMDVIRNPPINSDMYKVKLIRMLVPENLDTYLIHMAIEILQSGSDSRTQPPCDSSRKRRFPSSAESCESCKESKEAVTETKASSSESKRKLPEWFAKGNVPSADTGSSSSMAKTKKKGLFS</sequence>
<evidence type="ECO:0000250" key="1">
    <source>
        <dbReference type="UniProtKB" id="Q14191"/>
    </source>
</evidence>
<evidence type="ECO:0000255" key="2"/>
<evidence type="ECO:0000255" key="3">
    <source>
        <dbReference type="PROSITE-ProRule" id="PRU00328"/>
    </source>
</evidence>
<evidence type="ECO:0000255" key="4">
    <source>
        <dbReference type="PROSITE-ProRule" id="PRU00541"/>
    </source>
</evidence>
<evidence type="ECO:0000255" key="5">
    <source>
        <dbReference type="PROSITE-ProRule" id="PRU00542"/>
    </source>
</evidence>
<evidence type="ECO:0000256" key="6">
    <source>
        <dbReference type="SAM" id="MobiDB-lite"/>
    </source>
</evidence>
<evidence type="ECO:0000269" key="7">
    <source>
    </source>
</evidence>
<evidence type="ECO:0000269" key="8">
    <source>
    </source>
</evidence>
<evidence type="ECO:0000269" key="9">
    <source>
    </source>
</evidence>
<evidence type="ECO:0000269" key="10">
    <source>
    </source>
</evidence>
<evidence type="ECO:0000269" key="11">
    <source>
    </source>
</evidence>
<evidence type="ECO:0000305" key="12"/>
<evidence type="ECO:0007744" key="13">
    <source>
        <dbReference type="PDB" id="2E6L"/>
    </source>
</evidence>
<evidence type="ECO:0007744" key="14">
    <source>
        <dbReference type="PDB" id="2E6M"/>
    </source>
</evidence>
<evidence type="ECO:0007829" key="15">
    <source>
        <dbReference type="PDB" id="2E6M"/>
    </source>
</evidence>
<comment type="function">
    <text evidence="1 7 9">Multifunctional enzyme that has magnesium and ATP-dependent 3'-5' DNA-helicase activity (By similarity). Has 3'-&gt;5' exonuclease activity on forked dsDNA (PubMed:17229737). Has no nuclease activity towards single-stranded DNA or blunt-ended double-stranded DNA. Binds preferentially to DNA substrates containing alternate secondary structures, such as replication forks and Holliday junctions. May play an important role in the dissociation of joint DNA molecules that can arise as products of homologous recombination, at stalled replication forks or during DNA repair. Alleviates stalling of DNA polymerases at the site of DNA lesions. Unwinds some G-quadruplex DNA. Plays a role in the formation of DNA replication focal centers; stably associates with foci elements generating binding sites for RP-A (By similarity). Plays a role in double-strand break repair after gamma-irradiation (By similarity).</text>
</comment>
<comment type="catalytic activity">
    <reaction evidence="1">
        <text>Couples ATP hydrolysis with the unwinding of duplex DNA by translocating in the 3'-5' direction.</text>
        <dbReference type="EC" id="5.6.2.4"/>
    </reaction>
</comment>
<comment type="catalytic activity">
    <reaction evidence="9">
        <text>ATP + H2O = ADP + phosphate + H(+)</text>
        <dbReference type="Rhea" id="RHEA:13065"/>
        <dbReference type="ChEBI" id="CHEBI:15377"/>
        <dbReference type="ChEBI" id="CHEBI:15378"/>
        <dbReference type="ChEBI" id="CHEBI:30616"/>
        <dbReference type="ChEBI" id="CHEBI:43474"/>
        <dbReference type="ChEBI" id="CHEBI:456216"/>
    </reaction>
</comment>
<comment type="cofactor">
    <cofactor evidence="9">
        <name>Zn(2+)</name>
        <dbReference type="ChEBI" id="CHEBI:29105"/>
    </cofactor>
    <cofactor evidence="9">
        <name>Mn(2+)</name>
        <dbReference type="ChEBI" id="CHEBI:29035"/>
    </cofactor>
    <text evidence="9">Binds 2 zinc ions in the exonuclease domain. Has high activity with manganese and zinc ions, and no activity with Mg(2+) (in vitro) (PubMed:17229737).</text>
</comment>
<comment type="cofactor">
    <cofactor evidence="1">
        <name>Zn(2+)</name>
        <dbReference type="ChEBI" id="CHEBI:29105"/>
    </cofactor>
    <text evidence="1">Binds a Zn(2+) ion in the helicase domain.</text>
</comment>
<comment type="activity regulation">
    <text evidence="9">Zinc ions stimulate the exonuclease activity.</text>
</comment>
<comment type="subunit">
    <text evidence="1 8">Monomer, and homooligomer. May exist as homodimer, homotrimer, homotetramer and/or homohexamer. Homotetramer, or homohexamer, when bound to DNA (By similarity). Interacts via its N-terminal domain with WRNIP1 (PubMed:11301316). Interacts with EXO1, PCNA and SUPV3L1. Interacts with PML (isoform PML-4) (By similarity). Interacts (via KBM motif) with XRCC5 and XRCC6; promoting recruitment to DNA damage sites (By similarity). Interacts with RECQL5; this interaction stimulates WRN helicase activity on DNA fork duplexes (By similarity).</text>
</comment>
<comment type="subcellular location">
    <subcellularLocation>
        <location evidence="1">Nucleus</location>
        <location evidence="1">Nucleolus</location>
    </subcellularLocation>
    <subcellularLocation>
        <location evidence="11">Nucleus</location>
    </subcellularLocation>
    <subcellularLocation>
        <location evidence="1">Nucleus</location>
        <location evidence="1">Nucleoplasm</location>
    </subcellularLocation>
    <subcellularLocation>
        <location evidence="1">Chromosome</location>
    </subcellularLocation>
    <text evidence="1">Gamma-irradiation leads to its translocation from nucleoli to nucleoplasm and PML regulates the irradiation-induced WRN relocation. Localizes to DNA damage sites.</text>
</comment>
<comment type="tissue specificity">
    <text evidence="7 10">Expressed ubiquitously in most organs at a low level, highly expressed in testis, ovary and spleen.</text>
</comment>
<comment type="domain">
    <text evidence="1">The KBM 2 (Ku-binding motif 2) and XLM (XLF-like motif) mediate cooperative interaction with XRCC5/Ku80 and XRCC6/Ku70 and recruitment to DNA damage sites.</text>
</comment>
<comment type="PTM">
    <text evidence="1">Phosphorylated by PRKDC.</text>
</comment>
<comment type="similarity">
    <text evidence="12">Belongs to the helicase family. RecQ subfamily.</text>
</comment>
<dbReference type="EC" id="3.1.-.-" evidence="9"/>
<dbReference type="EC" id="5.6.2.4" evidence="1"/>
<dbReference type="EMBL" id="D86527">
    <property type="protein sequence ID" value="BAA20270.1"/>
    <property type="molecule type" value="mRNA"/>
</dbReference>
<dbReference type="EMBL" id="D86526">
    <property type="protein sequence ID" value="BAA20269.1"/>
    <property type="molecule type" value="mRNA"/>
</dbReference>
<dbReference type="EMBL" id="AF091215">
    <property type="protein sequence ID" value="AAC78077.1"/>
    <property type="molecule type" value="mRNA"/>
</dbReference>
<dbReference type="EMBL" id="AF091216">
    <property type="protein sequence ID" value="AAC72359.1"/>
    <property type="molecule type" value="Genomic_DNA"/>
</dbReference>
<dbReference type="EMBL" id="AF241636">
    <property type="protein sequence ID" value="AAF64490.1"/>
    <property type="molecule type" value="mRNA"/>
</dbReference>
<dbReference type="EMBL" id="AC153789">
    <property type="status" value="NOT_ANNOTATED_CDS"/>
    <property type="molecule type" value="Genomic_DNA"/>
</dbReference>
<dbReference type="EMBL" id="AC115809">
    <property type="status" value="NOT_ANNOTATED_CDS"/>
    <property type="molecule type" value="Genomic_DNA"/>
</dbReference>
<dbReference type="EMBL" id="BC050921">
    <property type="protein sequence ID" value="AAH50921.1"/>
    <property type="molecule type" value="mRNA"/>
</dbReference>
<dbReference type="EMBL" id="BC060700">
    <property type="protein sequence ID" value="AAH60700.1"/>
    <property type="molecule type" value="mRNA"/>
</dbReference>
<dbReference type="CCDS" id="CCDS22229.1"/>
<dbReference type="PIR" id="T17452">
    <property type="entry name" value="T17452"/>
</dbReference>
<dbReference type="PIR" id="T30247">
    <property type="entry name" value="T30247"/>
</dbReference>
<dbReference type="RefSeq" id="NP_001116294.1">
    <property type="nucleotide sequence ID" value="NM_001122822.1"/>
</dbReference>
<dbReference type="RefSeq" id="NP_035851.3">
    <property type="nucleotide sequence ID" value="NM_011721.4"/>
</dbReference>
<dbReference type="RefSeq" id="XP_006509154.1">
    <property type="nucleotide sequence ID" value="XM_006509091.5"/>
</dbReference>
<dbReference type="RefSeq" id="XP_017168151.1">
    <property type="nucleotide sequence ID" value="XM_017312662.3"/>
</dbReference>
<dbReference type="PDB" id="2E6L">
    <property type="method" value="X-ray"/>
    <property type="resolution" value="2.20 A"/>
    <property type="chains" value="A=31-238"/>
</dbReference>
<dbReference type="PDB" id="2E6M">
    <property type="method" value="X-ray"/>
    <property type="resolution" value="2.00 A"/>
    <property type="chains" value="A=31-238"/>
</dbReference>
<dbReference type="PDBsum" id="2E6L"/>
<dbReference type="PDBsum" id="2E6M"/>
<dbReference type="SMR" id="O09053"/>
<dbReference type="BioGRID" id="204584">
    <property type="interactions" value="7"/>
</dbReference>
<dbReference type="DIP" id="DIP-27642N"/>
<dbReference type="FunCoup" id="O09053">
    <property type="interactions" value="2698"/>
</dbReference>
<dbReference type="STRING" id="10090.ENSMUSP00000033991"/>
<dbReference type="GuidetoPHARMACOLOGY" id="3259"/>
<dbReference type="GlyGen" id="O09053">
    <property type="glycosylation" value="1 site, 1 O-linked glycan (1 site)"/>
</dbReference>
<dbReference type="iPTMnet" id="O09053"/>
<dbReference type="PhosphoSitePlus" id="O09053"/>
<dbReference type="PaxDb" id="10090-ENSMUSP00000033990"/>
<dbReference type="PeptideAtlas" id="O09053"/>
<dbReference type="ProteomicsDB" id="297858"/>
<dbReference type="Pumba" id="O09053"/>
<dbReference type="Antibodypedia" id="10619">
    <property type="antibodies" value="312 antibodies from 40 providers"/>
</dbReference>
<dbReference type="DNASU" id="22427"/>
<dbReference type="Ensembl" id="ENSMUST00000033990.7">
    <property type="protein sequence ID" value="ENSMUSP00000033990.6"/>
    <property type="gene ID" value="ENSMUSG00000031583.14"/>
</dbReference>
<dbReference type="Ensembl" id="ENSMUST00000033991.13">
    <property type="protein sequence ID" value="ENSMUSP00000033991.7"/>
    <property type="gene ID" value="ENSMUSG00000031583.14"/>
</dbReference>
<dbReference type="GeneID" id="22427"/>
<dbReference type="KEGG" id="mmu:22427"/>
<dbReference type="UCSC" id="uc009ljw.1">
    <property type="organism name" value="mouse"/>
</dbReference>
<dbReference type="AGR" id="MGI:109635"/>
<dbReference type="CTD" id="7486"/>
<dbReference type="MGI" id="MGI:109635">
    <property type="gene designation" value="Wrn"/>
</dbReference>
<dbReference type="VEuPathDB" id="HostDB:ENSMUSG00000031583"/>
<dbReference type="eggNOG" id="KOG0351">
    <property type="taxonomic scope" value="Eukaryota"/>
</dbReference>
<dbReference type="eggNOG" id="KOG4373">
    <property type="taxonomic scope" value="Eukaryota"/>
</dbReference>
<dbReference type="GeneTree" id="ENSGT00940000159168"/>
<dbReference type="HOGENOM" id="CLU_001103_11_1_1"/>
<dbReference type="InParanoid" id="O09053"/>
<dbReference type="OMA" id="TYLIHMV"/>
<dbReference type="OrthoDB" id="10261556at2759"/>
<dbReference type="PhylomeDB" id="O09053"/>
<dbReference type="TreeFam" id="TF312852"/>
<dbReference type="Reactome" id="R-MMU-174414">
    <property type="pathway name" value="Processive synthesis on the C-strand of the telomere"/>
</dbReference>
<dbReference type="Reactome" id="R-MMU-174437">
    <property type="pathway name" value="Removal of the Flap Intermediate from the C-strand"/>
</dbReference>
<dbReference type="Reactome" id="R-MMU-5685938">
    <property type="pathway name" value="HDR through Single Strand Annealing (SSA)"/>
</dbReference>
<dbReference type="Reactome" id="R-MMU-5685942">
    <property type="pathway name" value="HDR through Homologous Recombination (HRR)"/>
</dbReference>
<dbReference type="Reactome" id="R-MMU-5693568">
    <property type="pathway name" value="Resolution of D-loop Structures through Holliday Junction Intermediates"/>
</dbReference>
<dbReference type="Reactome" id="R-MMU-5693579">
    <property type="pathway name" value="Homologous DNA Pairing and Strand Exchange"/>
</dbReference>
<dbReference type="Reactome" id="R-MMU-5693607">
    <property type="pathway name" value="Processing of DNA double-strand break ends"/>
</dbReference>
<dbReference type="Reactome" id="R-MMU-5693616">
    <property type="pathway name" value="Presynaptic phase of homologous DNA pairing and strand exchange"/>
</dbReference>
<dbReference type="Reactome" id="R-MMU-6804756">
    <property type="pathway name" value="Regulation of TP53 Activity through Phosphorylation"/>
</dbReference>
<dbReference type="Reactome" id="R-MMU-69473">
    <property type="pathway name" value="G2/M DNA damage checkpoint"/>
</dbReference>
<dbReference type="BioGRID-ORCS" id="22427">
    <property type="hits" value="7 hits in 116 CRISPR screens"/>
</dbReference>
<dbReference type="ChiTaRS" id="Wrn">
    <property type="organism name" value="mouse"/>
</dbReference>
<dbReference type="EvolutionaryTrace" id="O09053"/>
<dbReference type="PRO" id="PR:O09053"/>
<dbReference type="Proteomes" id="UP000000589">
    <property type="component" value="Chromosome 8"/>
</dbReference>
<dbReference type="RNAct" id="O09053">
    <property type="molecule type" value="protein"/>
</dbReference>
<dbReference type="Bgee" id="ENSMUSG00000031583">
    <property type="expression patterns" value="Expressed in embryonic post-anal tail and 227 other cell types or tissues"/>
</dbReference>
<dbReference type="ExpressionAtlas" id="O09053">
    <property type="expression patterns" value="baseline and differential"/>
</dbReference>
<dbReference type="GO" id="GO:0005813">
    <property type="term" value="C:centrosome"/>
    <property type="evidence" value="ECO:0007669"/>
    <property type="project" value="Ensembl"/>
</dbReference>
<dbReference type="GO" id="GO:0000781">
    <property type="term" value="C:chromosome, telomeric region"/>
    <property type="evidence" value="ECO:0000315"/>
    <property type="project" value="BHF-UCL"/>
</dbReference>
<dbReference type="GO" id="GO:0016607">
    <property type="term" value="C:nuclear speck"/>
    <property type="evidence" value="ECO:0007669"/>
    <property type="project" value="Ensembl"/>
</dbReference>
<dbReference type="GO" id="GO:0005730">
    <property type="term" value="C:nucleolus"/>
    <property type="evidence" value="ECO:0000250"/>
    <property type="project" value="UniProtKB"/>
</dbReference>
<dbReference type="GO" id="GO:0005654">
    <property type="term" value="C:nucleoplasm"/>
    <property type="evidence" value="ECO:0000314"/>
    <property type="project" value="MGI"/>
</dbReference>
<dbReference type="GO" id="GO:0005634">
    <property type="term" value="C:nucleus"/>
    <property type="evidence" value="ECO:0000314"/>
    <property type="project" value="MGI"/>
</dbReference>
<dbReference type="GO" id="GO:0005657">
    <property type="term" value="C:replication fork"/>
    <property type="evidence" value="ECO:0000315"/>
    <property type="project" value="BHF-UCL"/>
</dbReference>
<dbReference type="GO" id="GO:0043138">
    <property type="term" value="F:3'-5' DNA helicase activity"/>
    <property type="evidence" value="ECO:0007669"/>
    <property type="project" value="Ensembl"/>
</dbReference>
<dbReference type="GO" id="GO:0008408">
    <property type="term" value="F:3'-5' exonuclease activity"/>
    <property type="evidence" value="ECO:0000314"/>
    <property type="project" value="MGI"/>
</dbReference>
<dbReference type="GO" id="GO:0070337">
    <property type="term" value="F:3'-flap-structured DNA binding"/>
    <property type="evidence" value="ECO:0007669"/>
    <property type="project" value="Ensembl"/>
</dbReference>
<dbReference type="GO" id="GO:1905773">
    <property type="term" value="F:8-hydroxy-2'-deoxyguanosine DNA binding"/>
    <property type="evidence" value="ECO:0007669"/>
    <property type="project" value="Ensembl"/>
</dbReference>
<dbReference type="GO" id="GO:0005524">
    <property type="term" value="F:ATP binding"/>
    <property type="evidence" value="ECO:0007669"/>
    <property type="project" value="UniProtKB-KW"/>
</dbReference>
<dbReference type="GO" id="GO:0016887">
    <property type="term" value="F:ATP hydrolysis activity"/>
    <property type="evidence" value="ECO:0007669"/>
    <property type="project" value="Ensembl"/>
</dbReference>
<dbReference type="GO" id="GO:0000405">
    <property type="term" value="F:bubble DNA binding"/>
    <property type="evidence" value="ECO:0007669"/>
    <property type="project" value="Ensembl"/>
</dbReference>
<dbReference type="GO" id="GO:0003678">
    <property type="term" value="F:DNA helicase activity"/>
    <property type="evidence" value="ECO:0000266"/>
    <property type="project" value="MGI"/>
</dbReference>
<dbReference type="GO" id="GO:0004527">
    <property type="term" value="F:exonuclease activity"/>
    <property type="evidence" value="ECO:0000266"/>
    <property type="project" value="MGI"/>
</dbReference>
<dbReference type="GO" id="GO:0061749">
    <property type="term" value="F:forked DNA-dependent helicase activity"/>
    <property type="evidence" value="ECO:0007669"/>
    <property type="project" value="Ensembl"/>
</dbReference>
<dbReference type="GO" id="GO:0000400">
    <property type="term" value="F:four-way junction DNA binding"/>
    <property type="evidence" value="ECO:0007669"/>
    <property type="project" value="Ensembl"/>
</dbReference>
<dbReference type="GO" id="GO:0009378">
    <property type="term" value="F:four-way junction helicase activity"/>
    <property type="evidence" value="ECO:0007669"/>
    <property type="project" value="Ensembl"/>
</dbReference>
<dbReference type="GO" id="GO:0000287">
    <property type="term" value="F:magnesium ion binding"/>
    <property type="evidence" value="ECO:0000250"/>
    <property type="project" value="UniProtKB"/>
</dbReference>
<dbReference type="GO" id="GO:0030145">
    <property type="term" value="F:manganese ion binding"/>
    <property type="evidence" value="ECO:0000250"/>
    <property type="project" value="UniProtKB"/>
</dbReference>
<dbReference type="GO" id="GO:0032405">
    <property type="term" value="F:MutLalpha complex binding"/>
    <property type="evidence" value="ECO:0007669"/>
    <property type="project" value="Ensembl"/>
</dbReference>
<dbReference type="GO" id="GO:0042803">
    <property type="term" value="F:protein homodimerization activity"/>
    <property type="evidence" value="ECO:0007669"/>
    <property type="project" value="Ensembl"/>
</dbReference>
<dbReference type="GO" id="GO:0061821">
    <property type="term" value="F:telomeric D-loop binding"/>
    <property type="evidence" value="ECO:0007669"/>
    <property type="project" value="Ensembl"/>
</dbReference>
<dbReference type="GO" id="GO:0061849">
    <property type="term" value="F:telomeric G-quadruplex DNA binding"/>
    <property type="evidence" value="ECO:0007669"/>
    <property type="project" value="Ensembl"/>
</dbReference>
<dbReference type="GO" id="GO:0000403">
    <property type="term" value="F:Y-form DNA binding"/>
    <property type="evidence" value="ECO:0007669"/>
    <property type="project" value="Ensembl"/>
</dbReference>
<dbReference type="GO" id="GO:0006284">
    <property type="term" value="P:base-excision repair"/>
    <property type="evidence" value="ECO:0007669"/>
    <property type="project" value="Ensembl"/>
</dbReference>
<dbReference type="GO" id="GO:0071480">
    <property type="term" value="P:cellular response to gamma radiation"/>
    <property type="evidence" value="ECO:0000250"/>
    <property type="project" value="UniProtKB"/>
</dbReference>
<dbReference type="GO" id="GO:0009267">
    <property type="term" value="P:cellular response to starvation"/>
    <property type="evidence" value="ECO:0000266"/>
    <property type="project" value="MGI"/>
</dbReference>
<dbReference type="GO" id="GO:0090398">
    <property type="term" value="P:cellular senescence"/>
    <property type="evidence" value="ECO:0007669"/>
    <property type="project" value="Ensembl"/>
</dbReference>
<dbReference type="GO" id="GO:0008340">
    <property type="term" value="P:determination of adult lifespan"/>
    <property type="evidence" value="ECO:0000316"/>
    <property type="project" value="MGI"/>
</dbReference>
<dbReference type="GO" id="GO:0032392">
    <property type="term" value="P:DNA geometric change"/>
    <property type="evidence" value="ECO:0000315"/>
    <property type="project" value="BHF-UCL"/>
</dbReference>
<dbReference type="GO" id="GO:0006259">
    <property type="term" value="P:DNA metabolic process"/>
    <property type="evidence" value="ECO:0000315"/>
    <property type="project" value="MGI"/>
</dbReference>
<dbReference type="GO" id="GO:0006310">
    <property type="term" value="P:DNA recombination"/>
    <property type="evidence" value="ECO:0007669"/>
    <property type="project" value="InterPro"/>
</dbReference>
<dbReference type="GO" id="GO:0006260">
    <property type="term" value="P:DNA replication"/>
    <property type="evidence" value="ECO:0000315"/>
    <property type="project" value="BHF-UCL"/>
</dbReference>
<dbReference type="GO" id="GO:0000731">
    <property type="term" value="P:DNA synthesis involved in DNA repair"/>
    <property type="evidence" value="ECO:0007669"/>
    <property type="project" value="Ensembl"/>
</dbReference>
<dbReference type="GO" id="GO:0006302">
    <property type="term" value="P:double-strand break repair"/>
    <property type="evidence" value="ECO:0000250"/>
    <property type="project" value="UniProtKB"/>
</dbReference>
<dbReference type="GO" id="GO:0098530">
    <property type="term" value="P:positive regulation of strand invasion"/>
    <property type="evidence" value="ECO:0007669"/>
    <property type="project" value="Ensembl"/>
</dbReference>
<dbReference type="GO" id="GO:1902570">
    <property type="term" value="P:protein localization to nucleolus"/>
    <property type="evidence" value="ECO:0000266"/>
    <property type="project" value="MGI"/>
</dbReference>
<dbReference type="GO" id="GO:0042981">
    <property type="term" value="P:regulation of apoptotic process"/>
    <property type="evidence" value="ECO:0000266"/>
    <property type="project" value="MGI"/>
</dbReference>
<dbReference type="GO" id="GO:0040009">
    <property type="term" value="P:regulation of growth rate"/>
    <property type="evidence" value="ECO:0000315"/>
    <property type="project" value="MGI"/>
</dbReference>
<dbReference type="GO" id="GO:0031297">
    <property type="term" value="P:replication fork processing"/>
    <property type="evidence" value="ECO:0007669"/>
    <property type="project" value="Ensembl"/>
</dbReference>
<dbReference type="GO" id="GO:0090399">
    <property type="term" value="P:replicative senescence"/>
    <property type="evidence" value="ECO:0000315"/>
    <property type="project" value="MGI"/>
</dbReference>
<dbReference type="GO" id="GO:0006979">
    <property type="term" value="P:response to oxidative stress"/>
    <property type="evidence" value="ECO:0007669"/>
    <property type="project" value="Ensembl"/>
</dbReference>
<dbReference type="GO" id="GO:0010225">
    <property type="term" value="P:response to UV-C"/>
    <property type="evidence" value="ECO:0007669"/>
    <property type="project" value="Ensembl"/>
</dbReference>
<dbReference type="GO" id="GO:0000723">
    <property type="term" value="P:telomere maintenance"/>
    <property type="evidence" value="ECO:0000315"/>
    <property type="project" value="MGI"/>
</dbReference>
<dbReference type="GO" id="GO:0061820">
    <property type="term" value="P:telomeric D-loop disassembly"/>
    <property type="evidence" value="ECO:0007669"/>
    <property type="project" value="Ensembl"/>
</dbReference>
<dbReference type="CDD" id="cd18017">
    <property type="entry name" value="DEXHc_RecQ3"/>
    <property type="match status" value="1"/>
</dbReference>
<dbReference type="CDD" id="cd06129">
    <property type="entry name" value="RNaseD_like"/>
    <property type="match status" value="1"/>
</dbReference>
<dbReference type="CDD" id="cd18794">
    <property type="entry name" value="SF2_C_RecQ"/>
    <property type="match status" value="1"/>
</dbReference>
<dbReference type="FunFam" id="1.10.10.10:FF:000369">
    <property type="entry name" value="Werner syndrome ATP-dependent helicase"/>
    <property type="match status" value="1"/>
</dbReference>
<dbReference type="FunFam" id="1.10.150.80:FF:000005">
    <property type="entry name" value="Werner syndrome ATP-dependent helicase homolog"/>
    <property type="match status" value="1"/>
</dbReference>
<dbReference type="FunFam" id="3.30.420.10:FF:000053">
    <property type="entry name" value="Werner syndrome ATP-dependent helicase homolog"/>
    <property type="match status" value="1"/>
</dbReference>
<dbReference type="FunFam" id="3.40.50.300:FF:000941">
    <property type="entry name" value="Werner syndrome RecQ like helicase"/>
    <property type="match status" value="1"/>
</dbReference>
<dbReference type="FunFam" id="3.40.50.300:FF:001023">
    <property type="entry name" value="Werner syndrome RecQ like helicase"/>
    <property type="match status" value="1"/>
</dbReference>
<dbReference type="Gene3D" id="1.10.150.80">
    <property type="entry name" value="HRDC domain"/>
    <property type="match status" value="1"/>
</dbReference>
<dbReference type="Gene3D" id="3.40.50.300">
    <property type="entry name" value="P-loop containing nucleotide triphosphate hydrolases"/>
    <property type="match status" value="2"/>
</dbReference>
<dbReference type="Gene3D" id="3.30.420.10">
    <property type="entry name" value="Ribonuclease H-like superfamily/Ribonuclease H"/>
    <property type="match status" value="1"/>
</dbReference>
<dbReference type="Gene3D" id="1.10.10.10">
    <property type="entry name" value="Winged helix-like DNA-binding domain superfamily/Winged helix DNA-binding domain"/>
    <property type="match status" value="1"/>
</dbReference>
<dbReference type="InterPro" id="IPR002562">
    <property type="entry name" value="3'-5'_exonuclease_dom"/>
</dbReference>
<dbReference type="InterPro" id="IPR011545">
    <property type="entry name" value="DEAD/DEAH_box_helicase_dom"/>
</dbReference>
<dbReference type="InterPro" id="IPR004589">
    <property type="entry name" value="DNA_helicase_ATP-dep_RecQ"/>
</dbReference>
<dbReference type="InterPro" id="IPR014001">
    <property type="entry name" value="Helicase_ATP-bd"/>
</dbReference>
<dbReference type="InterPro" id="IPR001650">
    <property type="entry name" value="Helicase_C-like"/>
</dbReference>
<dbReference type="InterPro" id="IPR029491">
    <property type="entry name" value="Helicase_HTH"/>
</dbReference>
<dbReference type="InterPro" id="IPR010997">
    <property type="entry name" value="HRDC-like_sf"/>
</dbReference>
<dbReference type="InterPro" id="IPR002121">
    <property type="entry name" value="HRDC_dom"/>
</dbReference>
<dbReference type="InterPro" id="IPR044876">
    <property type="entry name" value="HRDC_dom_sf"/>
</dbReference>
<dbReference type="InterPro" id="IPR027417">
    <property type="entry name" value="P-loop_NTPase"/>
</dbReference>
<dbReference type="InterPro" id="IPR032284">
    <property type="entry name" value="RecQ_Zn-bd"/>
</dbReference>
<dbReference type="InterPro" id="IPR012337">
    <property type="entry name" value="RNaseH-like_sf"/>
</dbReference>
<dbReference type="InterPro" id="IPR036397">
    <property type="entry name" value="RNaseH_sf"/>
</dbReference>
<dbReference type="InterPro" id="IPR018982">
    <property type="entry name" value="RQC_domain"/>
</dbReference>
<dbReference type="InterPro" id="IPR036388">
    <property type="entry name" value="WH-like_DNA-bd_sf"/>
</dbReference>
<dbReference type="InterPro" id="IPR036390">
    <property type="entry name" value="WH_DNA-bd_sf"/>
</dbReference>
<dbReference type="NCBIfam" id="TIGR00614">
    <property type="entry name" value="recQ_fam"/>
    <property type="match status" value="1"/>
</dbReference>
<dbReference type="PANTHER" id="PTHR13710:SF120">
    <property type="entry name" value="BIFUNCTIONAL 3'-5' EXONUCLEASE_ATP-DEPENDENT HELICASE WRN"/>
    <property type="match status" value="1"/>
</dbReference>
<dbReference type="PANTHER" id="PTHR13710">
    <property type="entry name" value="DNA HELICASE RECQ FAMILY MEMBER"/>
    <property type="match status" value="1"/>
</dbReference>
<dbReference type="Pfam" id="PF00270">
    <property type="entry name" value="DEAD"/>
    <property type="match status" value="1"/>
</dbReference>
<dbReference type="Pfam" id="PF01612">
    <property type="entry name" value="DNA_pol_A_exo1"/>
    <property type="match status" value="1"/>
</dbReference>
<dbReference type="Pfam" id="PF00271">
    <property type="entry name" value="Helicase_C"/>
    <property type="match status" value="1"/>
</dbReference>
<dbReference type="Pfam" id="PF00570">
    <property type="entry name" value="HRDC"/>
    <property type="match status" value="1"/>
</dbReference>
<dbReference type="Pfam" id="PF14493">
    <property type="entry name" value="HTH_40"/>
    <property type="match status" value="1"/>
</dbReference>
<dbReference type="Pfam" id="PF16124">
    <property type="entry name" value="RecQ_Zn_bind"/>
    <property type="match status" value="1"/>
</dbReference>
<dbReference type="Pfam" id="PF09382">
    <property type="entry name" value="RQC"/>
    <property type="match status" value="1"/>
</dbReference>
<dbReference type="SMART" id="SM00474">
    <property type="entry name" value="35EXOc"/>
    <property type="match status" value="1"/>
</dbReference>
<dbReference type="SMART" id="SM00487">
    <property type="entry name" value="DEXDc"/>
    <property type="match status" value="1"/>
</dbReference>
<dbReference type="SMART" id="SM00490">
    <property type="entry name" value="HELICc"/>
    <property type="match status" value="1"/>
</dbReference>
<dbReference type="SMART" id="SM00341">
    <property type="entry name" value="HRDC"/>
    <property type="match status" value="1"/>
</dbReference>
<dbReference type="SMART" id="SM00956">
    <property type="entry name" value="RQC"/>
    <property type="match status" value="1"/>
</dbReference>
<dbReference type="SUPFAM" id="SSF47819">
    <property type="entry name" value="HRDC-like"/>
    <property type="match status" value="1"/>
</dbReference>
<dbReference type="SUPFAM" id="SSF52540">
    <property type="entry name" value="P-loop containing nucleoside triphosphate hydrolases"/>
    <property type="match status" value="1"/>
</dbReference>
<dbReference type="SUPFAM" id="SSF53098">
    <property type="entry name" value="Ribonuclease H-like"/>
    <property type="match status" value="1"/>
</dbReference>
<dbReference type="SUPFAM" id="SSF46785">
    <property type="entry name" value="Winged helix' DNA-binding domain"/>
    <property type="match status" value="1"/>
</dbReference>
<dbReference type="PROSITE" id="PS51192">
    <property type="entry name" value="HELICASE_ATP_BIND_1"/>
    <property type="match status" value="1"/>
</dbReference>
<dbReference type="PROSITE" id="PS51194">
    <property type="entry name" value="HELICASE_CTER"/>
    <property type="match status" value="1"/>
</dbReference>
<dbReference type="PROSITE" id="PS50967">
    <property type="entry name" value="HRDC"/>
    <property type="match status" value="1"/>
</dbReference>
<organism>
    <name type="scientific">Mus musculus</name>
    <name type="common">Mouse</name>
    <dbReference type="NCBI Taxonomy" id="10090"/>
    <lineage>
        <taxon>Eukaryota</taxon>
        <taxon>Metazoa</taxon>
        <taxon>Chordata</taxon>
        <taxon>Craniata</taxon>
        <taxon>Vertebrata</taxon>
        <taxon>Euteleostomi</taxon>
        <taxon>Mammalia</taxon>
        <taxon>Eutheria</taxon>
        <taxon>Euarchontoglires</taxon>
        <taxon>Glires</taxon>
        <taxon>Rodentia</taxon>
        <taxon>Myomorpha</taxon>
        <taxon>Muroidea</taxon>
        <taxon>Muridae</taxon>
        <taxon>Murinae</taxon>
        <taxon>Mus</taxon>
        <taxon>Mus</taxon>
    </lineage>
</organism>
<protein>
    <recommendedName>
        <fullName evidence="12">Bifunctional 3'-5' exonuclease/ATP-dependent helicase WRN</fullName>
    </recommendedName>
    <alternativeName>
        <fullName evidence="12">Werner syndrome protein homolog</fullName>
    </alternativeName>
    <domain>
        <recommendedName>
            <fullName>3'-5' exonuclease</fullName>
            <ecNumber evidence="9">3.1.-.-</ecNumber>
        </recommendedName>
    </domain>
    <domain>
        <recommendedName>
            <fullName>ATP-dependent helicase</fullName>
            <ecNumber evidence="1">5.6.2.4</ecNumber>
        </recommendedName>
        <alternativeName>
            <fullName evidence="12">DNA 3'-5' helicase WRN</fullName>
        </alternativeName>
    </domain>
</protein>
<accession>O09053</accession>
<accession>O09050</accession>
<accession>Q80YP9</accession>
<accession>Q9JKD4</accession>
<accession>Q9Z241</accession>
<accession>Q9Z242</accession>
<gene>
    <name type="primary">Wrn</name>
</gene>
<reference key="1">
    <citation type="journal article" date="1997" name="Genomics">
        <title>Cloning of a mouse homologue of the human Werner syndrome gene and assignment to 8A4 by fluorescence in situ hybridization.</title>
        <authorList>
            <person name="Imamura O."/>
            <person name="Ichikawa K."/>
            <person name="Yamabe Y."/>
            <person name="Goto M."/>
            <person name="Sugawara M."/>
            <person name="Furuichi Y."/>
        </authorList>
    </citation>
    <scope>NUCLEOTIDE SEQUENCE [MRNA]</scope>
    <scope>TISSUE SPECIFICITY</scope>
    <source>
        <strain>BALB/cJ</strain>
        <tissue>Spleen</tissue>
        <tissue>Testis</tissue>
    </source>
</reference>
<reference key="2">
    <citation type="submission" date="1998-09" db="EMBL/GenBank/DDBJ databases">
        <title>Genomic structure of the human Werner's gene and cloning of its mouse homolog.</title>
        <authorList>
            <person name="Paeper B.W."/>
            <person name="Gayle M."/>
            <person name="Brady W."/>
            <person name="Swartz A."/>
            <person name="Gillett L.A."/>
            <person name="Alisch R.S."/>
            <person name="Mulligan J."/>
            <person name="Galas D."/>
            <person name="Fu Y.-H."/>
        </authorList>
    </citation>
    <scope>NUCLEOTIDE SEQUENCE [GENOMIC DNA / MRNA]</scope>
</reference>
<reference key="3">
    <citation type="journal article" date="2000" name="Mol. Cell. Biol.">
        <title>Mutations in the WRN Gene in mice accelerate mortality in a p53-null background.</title>
        <authorList>
            <person name="Lombard D.B."/>
            <person name="Beard C."/>
            <person name="Johnson B."/>
            <person name="Marciniak R.A."/>
            <person name="Dausman J."/>
            <person name="Bronson R."/>
            <person name="Buhlmann J.E."/>
            <person name="Lipman R."/>
            <person name="Curry R."/>
            <person name="Sharpe A."/>
            <person name="Jaenisch R."/>
            <person name="Guarente L."/>
        </authorList>
    </citation>
    <scope>NUCLEOTIDE SEQUENCE [MRNA]</scope>
    <scope>FUNCTION</scope>
    <scope>TISSUE SPECIFICITY</scope>
    <source>
        <tissue>Lymph node</tissue>
        <tissue>Spleen</tissue>
    </source>
</reference>
<reference key="4">
    <citation type="journal article" date="2009" name="PLoS Biol.">
        <title>Lineage-specific biology revealed by a finished genome assembly of the mouse.</title>
        <authorList>
            <person name="Church D.M."/>
            <person name="Goodstadt L."/>
            <person name="Hillier L.W."/>
            <person name="Zody M.C."/>
            <person name="Goldstein S."/>
            <person name="She X."/>
            <person name="Bult C.J."/>
            <person name="Agarwala R."/>
            <person name="Cherry J.L."/>
            <person name="DiCuccio M."/>
            <person name="Hlavina W."/>
            <person name="Kapustin Y."/>
            <person name="Meric P."/>
            <person name="Maglott D."/>
            <person name="Birtle Z."/>
            <person name="Marques A.C."/>
            <person name="Graves T."/>
            <person name="Zhou S."/>
            <person name="Teague B."/>
            <person name="Potamousis K."/>
            <person name="Churas C."/>
            <person name="Place M."/>
            <person name="Herschleb J."/>
            <person name="Runnheim R."/>
            <person name="Forrest D."/>
            <person name="Amos-Landgraf J."/>
            <person name="Schwartz D.C."/>
            <person name="Cheng Z."/>
            <person name="Lindblad-Toh K."/>
            <person name="Eichler E.E."/>
            <person name="Ponting C.P."/>
        </authorList>
    </citation>
    <scope>NUCLEOTIDE SEQUENCE [LARGE SCALE GENOMIC DNA]</scope>
    <source>
        <strain>C57BL/6J</strain>
    </source>
</reference>
<reference key="5">
    <citation type="journal article" date="2004" name="Genome Res.">
        <title>The status, quality, and expansion of the NIH full-length cDNA project: the Mammalian Gene Collection (MGC).</title>
        <authorList>
            <consortium name="The MGC Project Team"/>
        </authorList>
    </citation>
    <scope>NUCLEOTIDE SEQUENCE [LARGE SCALE MRNA]</scope>
    <source>
        <strain>C57BL/6J</strain>
        <tissue>Brain</tissue>
    </source>
</reference>
<reference key="6">
    <citation type="journal article" date="1998" name="Proc. Natl. Acad. Sci. U.S.A.">
        <title>Nucleolar localization of the Werner syndrome protein in human cells.</title>
        <authorList>
            <person name="Marciniak R.A."/>
            <person name="Lombard D.B."/>
            <person name="Johnson F.B."/>
            <person name="Guarente L."/>
        </authorList>
    </citation>
    <scope>SUBCELLULAR LOCATION</scope>
</reference>
<reference key="7">
    <citation type="journal article" date="2001" name="J. Biol. Chem.">
        <title>A novel protein interacts with the Werner's syndrome gene product physically and functionally.</title>
        <authorList>
            <person name="Kawabe Y."/>
            <person name="Branzei D."/>
            <person name="Hayashi T."/>
            <person name="Suzuki H."/>
            <person name="Masuko T."/>
            <person name="Onoda F."/>
            <person name="Heo S.-J."/>
            <person name="Ikeda H."/>
            <person name="Shimamoto A."/>
            <person name="Furuichi Y."/>
            <person name="Seki M."/>
            <person name="Enomoto T."/>
        </authorList>
    </citation>
    <scope>INTERACTION WITH WRNIP1</scope>
</reference>
<reference key="8">
    <citation type="journal article" date="2010" name="Cell">
        <title>A tissue-specific atlas of mouse protein phosphorylation and expression.</title>
        <authorList>
            <person name="Huttlin E.L."/>
            <person name="Jedrychowski M.P."/>
            <person name="Elias J.E."/>
            <person name="Goswami T."/>
            <person name="Rad R."/>
            <person name="Beausoleil S.A."/>
            <person name="Villen J."/>
            <person name="Haas W."/>
            <person name="Sowa M.E."/>
            <person name="Gygi S.P."/>
        </authorList>
    </citation>
    <scope>IDENTIFICATION BY MASS SPECTROMETRY [LARGE SCALE ANALYSIS]</scope>
    <source>
        <tissue>Spleen</tissue>
    </source>
</reference>
<reference evidence="13 14" key="9">
    <citation type="journal article" date="2007" name="J. Biol. Chem.">
        <title>Probing the roles of active site residues in the 3'-5' exonuclease of the Werner syndrome protein.</title>
        <authorList>
            <person name="Choi J.M."/>
            <person name="Kang S.Y."/>
            <person name="Bae W.J."/>
            <person name="Jin K.S."/>
            <person name="Ree M."/>
            <person name="Cho Y."/>
        </authorList>
    </citation>
    <scope>X-RAY CRYSTALLOGRAPHY (2.0 ANGSTROMS) OF 31-238 IN COMPLEX WITH ZINC IONS AND SULFATE</scope>
    <scope>SUBUNIT</scope>
    <scope>FUNCTION</scope>
    <scope>EXONUCLEASE ACTIVITY</scope>
    <scope>ACTIVITY REGULATION</scope>
    <scope>CIRCULAR DICHROISM</scope>
    <scope>MUTAGENESIS OF LYS-185; ARG-190 AND TYR-206</scope>
</reference>
<keyword id="KW-0002">3D-structure</keyword>
<keyword id="KW-0067">ATP-binding</keyword>
<keyword id="KW-0158">Chromosome</keyword>
<keyword id="KW-0227">DNA damage</keyword>
<keyword id="KW-0234">DNA repair</keyword>
<keyword id="KW-0238">DNA-binding</keyword>
<keyword id="KW-0269">Exonuclease</keyword>
<keyword id="KW-0347">Helicase</keyword>
<keyword id="KW-0378">Hydrolase</keyword>
<keyword id="KW-0413">Isomerase</keyword>
<keyword id="KW-1017">Isopeptide bond</keyword>
<keyword id="KW-0460">Magnesium</keyword>
<keyword id="KW-0479">Metal-binding</keyword>
<keyword id="KW-0511">Multifunctional enzyme</keyword>
<keyword id="KW-0540">Nuclease</keyword>
<keyword id="KW-0547">Nucleotide-binding</keyword>
<keyword id="KW-0539">Nucleus</keyword>
<keyword id="KW-0597">Phosphoprotein</keyword>
<keyword id="KW-1185">Reference proteome</keyword>
<keyword id="KW-0832">Ubl conjugation</keyword>
<keyword id="KW-0862">Zinc</keyword>